<reference key="1">
    <citation type="journal article" date="2007" name="Proc. Natl. Acad. Sci. U.S.A.">
        <title>Genome and proteome of long-chain alkane degrading Geobacillus thermodenitrificans NG80-2 isolated from a deep-subsurface oil reservoir.</title>
        <authorList>
            <person name="Feng L."/>
            <person name="Wang W."/>
            <person name="Cheng J."/>
            <person name="Ren Y."/>
            <person name="Zhao G."/>
            <person name="Gao C."/>
            <person name="Tang Y."/>
            <person name="Liu X."/>
            <person name="Han W."/>
            <person name="Peng X."/>
            <person name="Liu R."/>
            <person name="Wang L."/>
        </authorList>
    </citation>
    <scope>NUCLEOTIDE SEQUENCE [LARGE SCALE GENOMIC DNA]</scope>
    <source>
        <strain>NG80-2</strain>
    </source>
</reference>
<comment type="function">
    <text evidence="1">Catalyzes the oxidation of malonate semialdehyde (MSA) and methylmalonate semialdehyde (MMSA) into acetyl-CoA and propanoyl-CoA, respectively. Is involved in a myo-inositol catabolic pathway. Bicarbonate, and not CO2, is the end-product of the enzymatic reaction.</text>
</comment>
<comment type="catalytic activity">
    <reaction evidence="1">
        <text>3-oxopropanoate + NAD(+) + CoA + H2O = hydrogencarbonate + acetyl-CoA + NADH + H(+)</text>
        <dbReference type="Rhea" id="RHEA:76615"/>
        <dbReference type="ChEBI" id="CHEBI:15377"/>
        <dbReference type="ChEBI" id="CHEBI:15378"/>
        <dbReference type="ChEBI" id="CHEBI:17544"/>
        <dbReference type="ChEBI" id="CHEBI:33190"/>
        <dbReference type="ChEBI" id="CHEBI:57287"/>
        <dbReference type="ChEBI" id="CHEBI:57288"/>
        <dbReference type="ChEBI" id="CHEBI:57540"/>
        <dbReference type="ChEBI" id="CHEBI:57945"/>
        <dbReference type="EC" id="1.2.1.27"/>
    </reaction>
    <physiologicalReaction direction="left-to-right" evidence="1">
        <dbReference type="Rhea" id="RHEA:76616"/>
    </physiologicalReaction>
</comment>
<comment type="catalytic activity">
    <reaction evidence="1">
        <text>2-methyl-3-oxopropanoate + NAD(+) + CoA + H2O = propanoyl-CoA + hydrogencarbonate + NADH + H(+)</text>
        <dbReference type="Rhea" id="RHEA:20804"/>
        <dbReference type="ChEBI" id="CHEBI:15377"/>
        <dbReference type="ChEBI" id="CHEBI:15378"/>
        <dbReference type="ChEBI" id="CHEBI:17544"/>
        <dbReference type="ChEBI" id="CHEBI:57287"/>
        <dbReference type="ChEBI" id="CHEBI:57392"/>
        <dbReference type="ChEBI" id="CHEBI:57540"/>
        <dbReference type="ChEBI" id="CHEBI:57700"/>
        <dbReference type="ChEBI" id="CHEBI:57945"/>
        <dbReference type="EC" id="1.2.1.27"/>
    </reaction>
    <physiologicalReaction direction="left-to-right" evidence="1">
        <dbReference type="Rhea" id="RHEA:20805"/>
    </physiologicalReaction>
</comment>
<comment type="pathway">
    <text evidence="1">Polyol metabolism; myo-inositol degradation into acetyl-CoA; acetyl-CoA from myo-inositol: step 7/7.</text>
</comment>
<comment type="subunit">
    <text evidence="1">Homotetramer.</text>
</comment>
<comment type="similarity">
    <text evidence="1">Belongs to the aldehyde dehydrogenase family. IolA subfamily.</text>
</comment>
<comment type="sequence caution" evidence="2">
    <conflict type="erroneous initiation">
        <sequence resource="EMBL-CDS" id="ABO67166"/>
    </conflict>
</comment>
<keyword id="KW-0520">NAD</keyword>
<keyword id="KW-0560">Oxidoreductase</keyword>
<sequence length="484" mass="52789">MTTGVQTLKNYIGGQWVESRSAKTEAVPNPATGEVLAYVPISTREDLDRAVAAAKEAFKTWSKTPVPRRARILFKYQQLLVEHWEELARLVTLENGKSYNEAYGEIQRGIECVEFAAGAPTLMMGRQLPSIATGIESGMYRYPIGVVGGITPFNFPMMVPCWMFPLAIACGNTFVLKPSERTPMLANRLAELFKEAGLPDGVLNIVHGAHDVVNGLLEHPDVKAISFVGSQPVGEYVYKTAAAHGKRVQALTGAKNHSIVMPDADLKVAVREIINAAFGSAGERCMAASVVVAVGDIADELVERLVAAANEIKIGNGLEESVFLGPVIREAHKQRTVNYIELGEKEGAILVRDGRKDAAVQGEGYFIGPTIFDRVTTDMTIWKDEIFAPVLSIVRVSTLDEAIEVANKSPFANGACIYTRDGGNVRKFRDEIDAGMLGVNLGVPAPMAFFPFSGWKNSFYGDLHANGMDGVEFYTRKKMLTARW</sequence>
<protein>
    <recommendedName>
        <fullName evidence="1">Malonate-semialdehyde dehydrogenase 1</fullName>
        <shortName evidence="1">MSA dehydrogenase 1</shortName>
        <ecNumber evidence="1">1.2.1.27</ecNumber>
    </recommendedName>
    <alternativeName>
        <fullName evidence="1">Methylmalonate-semialdehyde dehydrogenase 1</fullName>
        <shortName evidence="1">MMSA dehydrogenase 1</shortName>
        <shortName evidence="1">MSDH 1</shortName>
    </alternativeName>
</protein>
<gene>
    <name evidence="1" type="primary">iolA1</name>
    <name type="ordered locus">GTNG_1806</name>
</gene>
<accession>A4IPB2</accession>
<evidence type="ECO:0000255" key="1">
    <source>
        <dbReference type="HAMAP-Rule" id="MF_01670"/>
    </source>
</evidence>
<evidence type="ECO:0000305" key="2"/>
<dbReference type="EC" id="1.2.1.27" evidence="1"/>
<dbReference type="EMBL" id="CP000557">
    <property type="protein sequence ID" value="ABO67166.1"/>
    <property type="status" value="ALT_INIT"/>
    <property type="molecule type" value="Genomic_DNA"/>
</dbReference>
<dbReference type="RefSeq" id="WP_008880031.1">
    <property type="nucleotide sequence ID" value="NC_009328.1"/>
</dbReference>
<dbReference type="SMR" id="A4IPB2"/>
<dbReference type="KEGG" id="gtn:GTNG_1806"/>
<dbReference type="eggNOG" id="COG1012">
    <property type="taxonomic scope" value="Bacteria"/>
</dbReference>
<dbReference type="HOGENOM" id="CLU_005391_1_0_9"/>
<dbReference type="UniPathway" id="UPA00076">
    <property type="reaction ID" value="UER00148"/>
</dbReference>
<dbReference type="Proteomes" id="UP000001578">
    <property type="component" value="Chromosome"/>
</dbReference>
<dbReference type="GO" id="GO:0018478">
    <property type="term" value="F:malonate-semialdehyde dehydrogenase (acetylating) activity"/>
    <property type="evidence" value="ECO:0007669"/>
    <property type="project" value="UniProtKB-UniRule"/>
</dbReference>
<dbReference type="GO" id="GO:0004491">
    <property type="term" value="F:methylmalonate-semialdehyde dehydrogenase (acylating, NAD) activity"/>
    <property type="evidence" value="ECO:0007669"/>
    <property type="project" value="UniProtKB-UniRule"/>
</dbReference>
<dbReference type="GO" id="GO:0019310">
    <property type="term" value="P:inositol catabolic process"/>
    <property type="evidence" value="ECO:0007669"/>
    <property type="project" value="UniProtKB-UniRule"/>
</dbReference>
<dbReference type="GO" id="GO:0006210">
    <property type="term" value="P:thymine catabolic process"/>
    <property type="evidence" value="ECO:0007669"/>
    <property type="project" value="TreeGrafter"/>
</dbReference>
<dbReference type="GO" id="GO:0006574">
    <property type="term" value="P:valine catabolic process"/>
    <property type="evidence" value="ECO:0007669"/>
    <property type="project" value="TreeGrafter"/>
</dbReference>
<dbReference type="CDD" id="cd07085">
    <property type="entry name" value="ALDH_F6_MMSDH"/>
    <property type="match status" value="1"/>
</dbReference>
<dbReference type="FunFam" id="3.40.309.10:FF:000002">
    <property type="entry name" value="Methylmalonate-semialdehyde dehydrogenase (Acylating)"/>
    <property type="match status" value="1"/>
</dbReference>
<dbReference type="FunFam" id="3.40.605.10:FF:000003">
    <property type="entry name" value="Methylmalonate-semialdehyde dehydrogenase [acylating]"/>
    <property type="match status" value="1"/>
</dbReference>
<dbReference type="Gene3D" id="3.40.605.10">
    <property type="entry name" value="Aldehyde Dehydrogenase, Chain A, domain 1"/>
    <property type="match status" value="1"/>
</dbReference>
<dbReference type="Gene3D" id="3.40.309.10">
    <property type="entry name" value="Aldehyde Dehydrogenase, Chain A, domain 2"/>
    <property type="match status" value="1"/>
</dbReference>
<dbReference type="HAMAP" id="MF_01670">
    <property type="entry name" value="IolA"/>
    <property type="match status" value="1"/>
</dbReference>
<dbReference type="InterPro" id="IPR016161">
    <property type="entry name" value="Ald_DH/histidinol_DH"/>
</dbReference>
<dbReference type="InterPro" id="IPR016163">
    <property type="entry name" value="Ald_DH_C"/>
</dbReference>
<dbReference type="InterPro" id="IPR016160">
    <property type="entry name" value="Ald_DH_CS_CYS"/>
</dbReference>
<dbReference type="InterPro" id="IPR016162">
    <property type="entry name" value="Ald_DH_N"/>
</dbReference>
<dbReference type="InterPro" id="IPR015590">
    <property type="entry name" value="Aldehyde_DH_dom"/>
</dbReference>
<dbReference type="InterPro" id="IPR010061">
    <property type="entry name" value="MeMal-semiAld_DH"/>
</dbReference>
<dbReference type="InterPro" id="IPR023510">
    <property type="entry name" value="MSDH_GmP_bac"/>
</dbReference>
<dbReference type="NCBIfam" id="TIGR01722">
    <property type="entry name" value="MMSDH"/>
    <property type="match status" value="1"/>
</dbReference>
<dbReference type="PANTHER" id="PTHR43866">
    <property type="entry name" value="MALONATE-SEMIALDEHYDE DEHYDROGENASE"/>
    <property type="match status" value="1"/>
</dbReference>
<dbReference type="PANTHER" id="PTHR43866:SF4">
    <property type="entry name" value="MALONATE-SEMIALDEHYDE DEHYDROGENASE"/>
    <property type="match status" value="1"/>
</dbReference>
<dbReference type="Pfam" id="PF00171">
    <property type="entry name" value="Aldedh"/>
    <property type="match status" value="1"/>
</dbReference>
<dbReference type="SUPFAM" id="SSF53720">
    <property type="entry name" value="ALDH-like"/>
    <property type="match status" value="1"/>
</dbReference>
<dbReference type="PROSITE" id="PS00070">
    <property type="entry name" value="ALDEHYDE_DEHYDR_CYS"/>
    <property type="match status" value="1"/>
</dbReference>
<organism>
    <name type="scientific">Geobacillus thermodenitrificans (strain NG80-2)</name>
    <dbReference type="NCBI Taxonomy" id="420246"/>
    <lineage>
        <taxon>Bacteria</taxon>
        <taxon>Bacillati</taxon>
        <taxon>Bacillota</taxon>
        <taxon>Bacilli</taxon>
        <taxon>Bacillales</taxon>
        <taxon>Anoxybacillaceae</taxon>
        <taxon>Geobacillus</taxon>
    </lineage>
</organism>
<feature type="chain" id="PRO_0000352342" description="Malonate-semialdehyde dehydrogenase 1">
    <location>
        <begin position="1"/>
        <end position="484"/>
    </location>
</feature>
<feature type="active site" description="Nucleophile" evidence="1">
    <location>
        <position position="285"/>
    </location>
</feature>
<feature type="binding site" evidence="1">
    <location>
        <position position="153"/>
    </location>
    <ligand>
        <name>NAD(+)</name>
        <dbReference type="ChEBI" id="CHEBI:57540"/>
    </ligand>
</feature>
<feature type="binding site" evidence="1">
    <location>
        <position position="177"/>
    </location>
    <ligand>
        <name>NAD(+)</name>
        <dbReference type="ChEBI" id="CHEBI:57540"/>
    </ligand>
</feature>
<feature type="binding site" evidence="1">
    <location>
        <position position="180"/>
    </location>
    <ligand>
        <name>NAD(+)</name>
        <dbReference type="ChEBI" id="CHEBI:57540"/>
    </ligand>
</feature>
<feature type="binding site" evidence="1">
    <location>
        <position position="181"/>
    </location>
    <ligand>
        <name>NAD(+)</name>
        <dbReference type="ChEBI" id="CHEBI:57540"/>
    </ligand>
</feature>
<feature type="binding site" evidence="1">
    <location>
        <position position="230"/>
    </location>
    <ligand>
        <name>NAD(+)</name>
        <dbReference type="ChEBI" id="CHEBI:57540"/>
    </ligand>
</feature>
<feature type="binding site" evidence="1">
    <location>
        <position position="252"/>
    </location>
    <ligand>
        <name>NAD(+)</name>
        <dbReference type="ChEBI" id="CHEBI:57540"/>
    </ligand>
</feature>
<feature type="binding site" evidence="1">
    <location>
        <position position="385"/>
    </location>
    <ligand>
        <name>NAD(+)</name>
        <dbReference type="ChEBI" id="CHEBI:57540"/>
    </ligand>
</feature>
<name>IOLA1_GEOTN</name>
<proteinExistence type="inferred from homology"/>